<gene>
    <name evidence="1" type="primary">hemE</name>
    <name type="ordered locus">CTL0116</name>
</gene>
<feature type="chain" id="PRO_1000099982" description="Uroporphyrinogen decarboxylase">
    <location>
        <begin position="1"/>
        <end position="336"/>
    </location>
</feature>
<feature type="binding site" evidence="1">
    <location>
        <begin position="24"/>
        <end position="28"/>
    </location>
    <ligand>
        <name>substrate</name>
    </ligand>
</feature>
<feature type="binding site" evidence="1">
    <location>
        <position position="73"/>
    </location>
    <ligand>
        <name>substrate</name>
    </ligand>
</feature>
<feature type="binding site" evidence="1">
    <location>
        <position position="142"/>
    </location>
    <ligand>
        <name>substrate</name>
    </ligand>
</feature>
<feature type="binding site" evidence="1">
    <location>
        <position position="197"/>
    </location>
    <ligand>
        <name>substrate</name>
    </ligand>
</feature>
<feature type="binding site" evidence="1">
    <location>
        <position position="312"/>
    </location>
    <ligand>
        <name>substrate</name>
    </ligand>
</feature>
<feature type="site" description="Transition state stabilizer" evidence="1">
    <location>
        <position position="73"/>
    </location>
</feature>
<proteinExistence type="inferred from homology"/>
<reference key="1">
    <citation type="journal article" date="2008" name="Genome Res.">
        <title>Chlamydia trachomatis: genome sequence analysis of lymphogranuloma venereum isolates.</title>
        <authorList>
            <person name="Thomson N.R."/>
            <person name="Holden M.T.G."/>
            <person name="Carder C."/>
            <person name="Lennard N."/>
            <person name="Lockey S.J."/>
            <person name="Marsh P."/>
            <person name="Skipp P."/>
            <person name="O'Connor C.D."/>
            <person name="Goodhead I."/>
            <person name="Norbertzcak H."/>
            <person name="Harris B."/>
            <person name="Ormond D."/>
            <person name="Rance R."/>
            <person name="Quail M.A."/>
            <person name="Parkhill J."/>
            <person name="Stephens R.S."/>
            <person name="Clarke I.N."/>
        </authorList>
    </citation>
    <scope>NUCLEOTIDE SEQUENCE [LARGE SCALE GENOMIC DNA]</scope>
    <source>
        <strain>ATCC VR-902B / DSM 19102 / 434/Bu</strain>
    </source>
</reference>
<name>DCUP_CHLT2</name>
<evidence type="ECO:0000255" key="1">
    <source>
        <dbReference type="HAMAP-Rule" id="MF_00218"/>
    </source>
</evidence>
<protein>
    <recommendedName>
        <fullName evidence="1">Uroporphyrinogen decarboxylase</fullName>
        <shortName evidence="1">UPD</shortName>
        <shortName evidence="1">URO-D</shortName>
        <ecNumber evidence="1">4.1.1.37</ecNumber>
    </recommendedName>
</protein>
<sequence length="336" mass="37703">MPMTGFYETISPRDQQRPPIWFLRQVGRYIPQYQELKRNRSLKDFFLDTESIVEATLLGPSLLGVDAAIVFADILSILEGFSVDYRFAPGPEVSYSPHEPLIFTKDPQETFSFLLEAIQQLTKRLTVPLIAFAASPFTLASYLIEGGASRDYPKTIAFLYQYPDRFKALLDEITLGTATYLQMQVQAGAAAIQLFESSSLRLPPHLFAKYVVAPNTKLIRQIKQTGNPPISLFCRCFYQEFLSLYAIGADTLHPDYHVELPEVYRQIHSPGSIQGNFDPALLLLPQDALIAHLEAYLAPLKQQSHYIFNLGHGILPQTPIENVQAVVSCLTSISTS</sequence>
<accession>B0B8X3</accession>
<comment type="function">
    <text evidence="1">Catalyzes the decarboxylation of four acetate groups of uroporphyrinogen-III to yield coproporphyrinogen-III.</text>
</comment>
<comment type="catalytic activity">
    <reaction evidence="1">
        <text>uroporphyrinogen III + 4 H(+) = coproporphyrinogen III + 4 CO2</text>
        <dbReference type="Rhea" id="RHEA:19865"/>
        <dbReference type="ChEBI" id="CHEBI:15378"/>
        <dbReference type="ChEBI" id="CHEBI:16526"/>
        <dbReference type="ChEBI" id="CHEBI:57308"/>
        <dbReference type="ChEBI" id="CHEBI:57309"/>
        <dbReference type="EC" id="4.1.1.37"/>
    </reaction>
</comment>
<comment type="pathway">
    <text evidence="1">Porphyrin-containing compound metabolism; protoporphyrin-IX biosynthesis; coproporphyrinogen-III from 5-aminolevulinate: step 4/4.</text>
</comment>
<comment type="subunit">
    <text evidence="1">Homodimer.</text>
</comment>
<comment type="subcellular location">
    <subcellularLocation>
        <location evidence="1">Cytoplasm</location>
    </subcellularLocation>
</comment>
<comment type="similarity">
    <text evidence="1">Belongs to the uroporphyrinogen decarboxylase family.</text>
</comment>
<keyword id="KW-0963">Cytoplasm</keyword>
<keyword id="KW-0210">Decarboxylase</keyword>
<keyword id="KW-0456">Lyase</keyword>
<keyword id="KW-0627">Porphyrin biosynthesis</keyword>
<organism>
    <name type="scientific">Chlamydia trachomatis serovar L2 (strain ATCC VR-902B / DSM 19102 / 434/Bu)</name>
    <dbReference type="NCBI Taxonomy" id="471472"/>
    <lineage>
        <taxon>Bacteria</taxon>
        <taxon>Pseudomonadati</taxon>
        <taxon>Chlamydiota</taxon>
        <taxon>Chlamydiia</taxon>
        <taxon>Chlamydiales</taxon>
        <taxon>Chlamydiaceae</taxon>
        <taxon>Chlamydia/Chlamydophila group</taxon>
        <taxon>Chlamydia</taxon>
    </lineage>
</organism>
<dbReference type="EC" id="4.1.1.37" evidence="1"/>
<dbReference type="EMBL" id="AM884176">
    <property type="protein sequence ID" value="CAP03560.1"/>
    <property type="molecule type" value="Genomic_DNA"/>
</dbReference>
<dbReference type="RefSeq" id="WP_009872125.1">
    <property type="nucleotide sequence ID" value="NC_010287.1"/>
</dbReference>
<dbReference type="RefSeq" id="YP_001654207.1">
    <property type="nucleotide sequence ID" value="NC_010287.1"/>
</dbReference>
<dbReference type="SMR" id="B0B8X3"/>
<dbReference type="KEGG" id="ctb:CTL0116"/>
<dbReference type="PATRIC" id="fig|471472.4.peg.126"/>
<dbReference type="HOGENOM" id="CLU_040933_0_0_0"/>
<dbReference type="UniPathway" id="UPA00251">
    <property type="reaction ID" value="UER00321"/>
</dbReference>
<dbReference type="Proteomes" id="UP001154402">
    <property type="component" value="Chromosome"/>
</dbReference>
<dbReference type="GO" id="GO:0005829">
    <property type="term" value="C:cytosol"/>
    <property type="evidence" value="ECO:0007669"/>
    <property type="project" value="TreeGrafter"/>
</dbReference>
<dbReference type="GO" id="GO:0004853">
    <property type="term" value="F:uroporphyrinogen decarboxylase activity"/>
    <property type="evidence" value="ECO:0007669"/>
    <property type="project" value="UniProtKB-UniRule"/>
</dbReference>
<dbReference type="GO" id="GO:0006782">
    <property type="term" value="P:protoporphyrinogen IX biosynthetic process"/>
    <property type="evidence" value="ECO:0007669"/>
    <property type="project" value="UniProtKB-UniRule"/>
</dbReference>
<dbReference type="CDD" id="cd00717">
    <property type="entry name" value="URO-D"/>
    <property type="match status" value="1"/>
</dbReference>
<dbReference type="Gene3D" id="3.20.20.210">
    <property type="match status" value="1"/>
</dbReference>
<dbReference type="HAMAP" id="MF_00218">
    <property type="entry name" value="URO_D"/>
    <property type="match status" value="1"/>
</dbReference>
<dbReference type="InterPro" id="IPR038071">
    <property type="entry name" value="UROD/MetE-like_sf"/>
</dbReference>
<dbReference type="InterPro" id="IPR006361">
    <property type="entry name" value="Uroporphyrinogen_deCO2ase_HemE"/>
</dbReference>
<dbReference type="InterPro" id="IPR000257">
    <property type="entry name" value="Uroporphyrinogen_deCOase"/>
</dbReference>
<dbReference type="NCBIfam" id="TIGR01464">
    <property type="entry name" value="hemE"/>
    <property type="match status" value="1"/>
</dbReference>
<dbReference type="PANTHER" id="PTHR21091">
    <property type="entry name" value="METHYLTETRAHYDROFOLATE:HOMOCYSTEINE METHYLTRANSFERASE RELATED"/>
    <property type="match status" value="1"/>
</dbReference>
<dbReference type="PANTHER" id="PTHR21091:SF169">
    <property type="entry name" value="UROPORPHYRINOGEN DECARBOXYLASE"/>
    <property type="match status" value="1"/>
</dbReference>
<dbReference type="Pfam" id="PF01208">
    <property type="entry name" value="URO-D"/>
    <property type="match status" value="1"/>
</dbReference>
<dbReference type="SUPFAM" id="SSF51726">
    <property type="entry name" value="UROD/MetE-like"/>
    <property type="match status" value="1"/>
</dbReference>
<dbReference type="PROSITE" id="PS00906">
    <property type="entry name" value="UROD_1"/>
    <property type="match status" value="1"/>
</dbReference>
<dbReference type="PROSITE" id="PS00907">
    <property type="entry name" value="UROD_2"/>
    <property type="match status" value="1"/>
</dbReference>